<keyword id="KW-0032">Aminotransferase</keyword>
<keyword id="KW-0056">Arginine metabolism</keyword>
<keyword id="KW-0663">Pyridoxal phosphate</keyword>
<keyword id="KW-1185">Reference proteome</keyword>
<keyword id="KW-0808">Transferase</keyword>
<organism>
    <name type="scientific">Escherichia coli O1:K1 / APEC</name>
    <dbReference type="NCBI Taxonomy" id="405955"/>
    <lineage>
        <taxon>Bacteria</taxon>
        <taxon>Pseudomonadati</taxon>
        <taxon>Pseudomonadota</taxon>
        <taxon>Gammaproteobacteria</taxon>
        <taxon>Enterobacterales</taxon>
        <taxon>Enterobacteriaceae</taxon>
        <taxon>Escherichia</taxon>
    </lineage>
</organism>
<gene>
    <name evidence="1" type="primary">astC</name>
    <name evidence="1" type="synonym">argM</name>
    <name type="ordered locus">Ecok1_16250</name>
    <name type="ORF">APECO1_817</name>
</gene>
<feature type="chain" id="PRO_1000164383" description="Succinylornithine transaminase">
    <location>
        <begin position="1"/>
        <end position="406"/>
    </location>
</feature>
<feature type="modified residue" description="N6-(pyridoxal phosphate)lysine" evidence="1">
    <location>
        <position position="252"/>
    </location>
</feature>
<sequence length="406" mass="43558">MSQPITRENFDEWMIPVYAPAPFIPVRGEGSRLWDQQGKEYIDFAGGIAVNALGHAHPELREALNEQASKFWHTGNGYTNEPVLRLAKKLIDATFADRVFFCNSGAEANEAALKLARKFAHDRYGSHKSGIVAFKNAFHGRTLFTVSAGGQPAYSQDFAPLPPDIRHAAYNDINSASALIDDATCAVIVEPIQGEGGVVPASNAFLQGLRELCDRHNALLIFDEVQTGVGRTGELYACMHYGVTPDLLTTAKALGGGFPVGALLATEECASVMTVGTHGTTYGGNPLASAVAGKVLDLINTPEMLNGVKQRHDWFVERLNSINHHYSLFSEVRGLGLLIGCVLNADYAGQAKQISQEAVKAGVMVLIAGGNVVRFAPALNVSEEEVTTGLDRFAAACEHFVSRGSS</sequence>
<comment type="function">
    <text evidence="1">Catalyzes the transamination of N(2)-succinylornithine and alpha-ketoglutarate into N(2)-succinylglutamate semialdehyde and glutamate. Can also act as an acetylornithine aminotransferase.</text>
</comment>
<comment type="catalytic activity">
    <reaction evidence="1">
        <text>N(2)-succinyl-L-ornithine + 2-oxoglutarate = N-succinyl-L-glutamate 5-semialdehyde + L-glutamate</text>
        <dbReference type="Rhea" id="RHEA:16953"/>
        <dbReference type="ChEBI" id="CHEBI:16810"/>
        <dbReference type="ChEBI" id="CHEBI:29985"/>
        <dbReference type="ChEBI" id="CHEBI:58514"/>
        <dbReference type="ChEBI" id="CHEBI:58520"/>
        <dbReference type="EC" id="2.6.1.81"/>
    </reaction>
</comment>
<comment type="cofactor">
    <cofactor evidence="1">
        <name>pyridoxal 5'-phosphate</name>
        <dbReference type="ChEBI" id="CHEBI:597326"/>
    </cofactor>
</comment>
<comment type="pathway">
    <text evidence="1">Amino-acid degradation; L-arginine degradation via AST pathway; L-glutamate and succinate from L-arginine: step 3/5.</text>
</comment>
<comment type="similarity">
    <text evidence="1">Belongs to the class-III pyridoxal-phosphate-dependent aminotransferase family. AstC subfamily.</text>
</comment>
<proteinExistence type="inferred from homology"/>
<accession>A1ABS9</accession>
<protein>
    <recommendedName>
        <fullName evidence="1">Succinylornithine transaminase</fullName>
        <ecNumber evidence="1">2.6.1.81</ecNumber>
    </recommendedName>
    <alternativeName>
        <fullName evidence="1">Succinylornithine aminotransferase</fullName>
    </alternativeName>
</protein>
<dbReference type="EC" id="2.6.1.81" evidence="1"/>
<dbReference type="EMBL" id="CP000468">
    <property type="protein sequence ID" value="ABJ01119.1"/>
    <property type="molecule type" value="Genomic_DNA"/>
</dbReference>
<dbReference type="RefSeq" id="WP_000081990.1">
    <property type="nucleotide sequence ID" value="NZ_CADILS010000002.1"/>
</dbReference>
<dbReference type="SMR" id="A1ABS9"/>
<dbReference type="KEGG" id="ecv:APECO1_817"/>
<dbReference type="HOGENOM" id="CLU_016922_10_1_6"/>
<dbReference type="UniPathway" id="UPA00185">
    <property type="reaction ID" value="UER00281"/>
</dbReference>
<dbReference type="Proteomes" id="UP000008216">
    <property type="component" value="Chromosome"/>
</dbReference>
<dbReference type="GO" id="GO:0042802">
    <property type="term" value="F:identical protein binding"/>
    <property type="evidence" value="ECO:0007669"/>
    <property type="project" value="TreeGrafter"/>
</dbReference>
<dbReference type="GO" id="GO:0030170">
    <property type="term" value="F:pyridoxal phosphate binding"/>
    <property type="evidence" value="ECO:0007669"/>
    <property type="project" value="UniProtKB-UniRule"/>
</dbReference>
<dbReference type="GO" id="GO:0043825">
    <property type="term" value="F:succinylornithine transaminase activity"/>
    <property type="evidence" value="ECO:0007669"/>
    <property type="project" value="UniProtKB-EC"/>
</dbReference>
<dbReference type="GO" id="GO:1901607">
    <property type="term" value="P:alpha-amino acid biosynthetic process"/>
    <property type="evidence" value="ECO:0007669"/>
    <property type="project" value="UniProtKB-ARBA"/>
</dbReference>
<dbReference type="GO" id="GO:0019544">
    <property type="term" value="P:arginine catabolic process to glutamate"/>
    <property type="evidence" value="ECO:0007669"/>
    <property type="project" value="UniProtKB-UniRule"/>
</dbReference>
<dbReference type="GO" id="GO:0019545">
    <property type="term" value="P:arginine catabolic process to succinate"/>
    <property type="evidence" value="ECO:0007669"/>
    <property type="project" value="UniProtKB-UniRule"/>
</dbReference>
<dbReference type="GO" id="GO:0006593">
    <property type="term" value="P:ornithine catabolic process"/>
    <property type="evidence" value="ECO:0007669"/>
    <property type="project" value="InterPro"/>
</dbReference>
<dbReference type="CDD" id="cd00610">
    <property type="entry name" value="OAT_like"/>
    <property type="match status" value="1"/>
</dbReference>
<dbReference type="FunFam" id="3.40.640.10:FF:000004">
    <property type="entry name" value="Acetylornithine aminotransferase"/>
    <property type="match status" value="1"/>
</dbReference>
<dbReference type="FunFam" id="3.90.1150.10:FF:000009">
    <property type="entry name" value="Succinylornithine transaminase"/>
    <property type="match status" value="1"/>
</dbReference>
<dbReference type="Gene3D" id="3.90.1150.10">
    <property type="entry name" value="Aspartate Aminotransferase, domain 1"/>
    <property type="match status" value="1"/>
</dbReference>
<dbReference type="Gene3D" id="3.40.640.10">
    <property type="entry name" value="Type I PLP-dependent aspartate aminotransferase-like (Major domain)"/>
    <property type="match status" value="1"/>
</dbReference>
<dbReference type="HAMAP" id="MF_01107">
    <property type="entry name" value="ArgD_aminotrans_3"/>
    <property type="match status" value="1"/>
</dbReference>
<dbReference type="HAMAP" id="MF_01173">
    <property type="entry name" value="AstC_aminotrans_3"/>
    <property type="match status" value="1"/>
</dbReference>
<dbReference type="InterPro" id="IPR017652">
    <property type="entry name" value="Ac/SucOrn_transaminase_bac"/>
</dbReference>
<dbReference type="InterPro" id="IPR004636">
    <property type="entry name" value="AcOrn/SuccOrn_fam"/>
</dbReference>
<dbReference type="InterPro" id="IPR005814">
    <property type="entry name" value="Aminotrans_3"/>
</dbReference>
<dbReference type="InterPro" id="IPR049704">
    <property type="entry name" value="Aminotrans_3_PPA_site"/>
</dbReference>
<dbReference type="InterPro" id="IPR050103">
    <property type="entry name" value="Class-III_PLP-dep_AT"/>
</dbReference>
<dbReference type="InterPro" id="IPR015424">
    <property type="entry name" value="PyrdxlP-dep_Trfase"/>
</dbReference>
<dbReference type="InterPro" id="IPR015421">
    <property type="entry name" value="PyrdxlP-dep_Trfase_major"/>
</dbReference>
<dbReference type="InterPro" id="IPR015422">
    <property type="entry name" value="PyrdxlP-dep_Trfase_small"/>
</dbReference>
<dbReference type="InterPro" id="IPR026330">
    <property type="entry name" value="SOAT"/>
</dbReference>
<dbReference type="NCBIfam" id="TIGR03246">
    <property type="entry name" value="arg_catab_astC"/>
    <property type="match status" value="1"/>
</dbReference>
<dbReference type="NCBIfam" id="TIGR00707">
    <property type="entry name" value="argD"/>
    <property type="match status" value="1"/>
</dbReference>
<dbReference type="NCBIfam" id="NF002325">
    <property type="entry name" value="PRK01278.1"/>
    <property type="match status" value="1"/>
</dbReference>
<dbReference type="NCBIfam" id="NF003468">
    <property type="entry name" value="PRK05093.1"/>
    <property type="match status" value="1"/>
</dbReference>
<dbReference type="NCBIfam" id="NF009047">
    <property type="entry name" value="PRK12381.1"/>
    <property type="match status" value="1"/>
</dbReference>
<dbReference type="PANTHER" id="PTHR11986">
    <property type="entry name" value="AMINOTRANSFERASE CLASS III"/>
    <property type="match status" value="1"/>
</dbReference>
<dbReference type="PANTHER" id="PTHR11986:SF113">
    <property type="entry name" value="SUCCINYLORNITHINE TRANSAMINASE"/>
    <property type="match status" value="1"/>
</dbReference>
<dbReference type="Pfam" id="PF00202">
    <property type="entry name" value="Aminotran_3"/>
    <property type="match status" value="1"/>
</dbReference>
<dbReference type="PIRSF" id="PIRSF000521">
    <property type="entry name" value="Transaminase_4ab_Lys_Orn"/>
    <property type="match status" value="1"/>
</dbReference>
<dbReference type="SUPFAM" id="SSF53383">
    <property type="entry name" value="PLP-dependent transferases"/>
    <property type="match status" value="1"/>
</dbReference>
<dbReference type="PROSITE" id="PS00600">
    <property type="entry name" value="AA_TRANSFER_CLASS_3"/>
    <property type="match status" value="1"/>
</dbReference>
<name>ASTC_ECOK1</name>
<evidence type="ECO:0000255" key="1">
    <source>
        <dbReference type="HAMAP-Rule" id="MF_01173"/>
    </source>
</evidence>
<reference key="1">
    <citation type="journal article" date="2007" name="J. Bacteriol.">
        <title>The genome sequence of avian pathogenic Escherichia coli strain O1:K1:H7 shares strong similarities with human extraintestinal pathogenic E. coli genomes.</title>
        <authorList>
            <person name="Johnson T.J."/>
            <person name="Kariyawasam S."/>
            <person name="Wannemuehler Y."/>
            <person name="Mangiamele P."/>
            <person name="Johnson S.J."/>
            <person name="Doetkott C."/>
            <person name="Skyberg J.A."/>
            <person name="Lynne A.M."/>
            <person name="Johnson J.R."/>
            <person name="Nolan L.K."/>
        </authorList>
    </citation>
    <scope>NUCLEOTIDE SEQUENCE [LARGE SCALE GENOMIC DNA]</scope>
</reference>